<proteinExistence type="evidence at transcript level"/>
<comment type="function">
    <text evidence="2">Catalyzes the S-methylation of thiopurine drugs such as 6-mercaptopurine (also called mercaptopurine, 6-MP or its brand name Purinethol) using S-adenosyl-L-methionine as the methyl donor. TPMT activity modulates the cytotoxic effects of thiopurine prodrugs. A natural substrate for this enzyme has yet to be identified.</text>
</comment>
<comment type="catalytic activity">
    <reaction evidence="2">
        <text>S-adenosyl-L-methionine + a thiopurine = S-adenosyl-L-homocysteine + a thiopurine S-methylether.</text>
        <dbReference type="EC" id="2.1.1.67"/>
    </reaction>
</comment>
<comment type="catalytic activity">
    <reaction evidence="2">
        <text>mercaptopurine + S-adenosyl-L-methionine = 6-methylthiopurine + S-adenosyl-L-homocysteine + H(+)</text>
        <dbReference type="Rhea" id="RHEA:12609"/>
        <dbReference type="ChEBI" id="CHEBI:15378"/>
        <dbReference type="ChEBI" id="CHEBI:28279"/>
        <dbReference type="ChEBI" id="CHEBI:50667"/>
        <dbReference type="ChEBI" id="CHEBI:57856"/>
        <dbReference type="ChEBI" id="CHEBI:59789"/>
        <dbReference type="EC" id="2.1.1.67"/>
    </reaction>
</comment>
<comment type="subunit">
    <text evidence="2">Monomer.</text>
</comment>
<comment type="subcellular location">
    <subcellularLocation>
        <location>Cytoplasm</location>
    </subcellularLocation>
</comment>
<comment type="similarity">
    <text evidence="4">Belongs to the class I-like SAM-binding methyltransferase superfamily. TPMT family.</text>
</comment>
<feature type="chain" id="PRO_0000220113" description="Thiopurine S-methyltransferase">
    <location>
        <begin position="1"/>
        <end position="240"/>
    </location>
</feature>
<feature type="binding site" evidence="1">
    <location>
        <begin position="24"/>
        <end position="35"/>
    </location>
    <ligand>
        <name>S-adenosyl-L-methionine</name>
        <dbReference type="ChEBI" id="CHEBI:59789"/>
    </ligand>
</feature>
<feature type="binding site" evidence="1">
    <location>
        <position position="35"/>
    </location>
    <ligand>
        <name>substrate</name>
    </ligand>
</feature>
<feature type="binding site" evidence="1">
    <location>
        <position position="64"/>
    </location>
    <ligand>
        <name>S-adenosyl-L-methionine</name>
        <dbReference type="ChEBI" id="CHEBI:59789"/>
    </ligand>
</feature>
<feature type="binding site" evidence="1">
    <location>
        <position position="85"/>
    </location>
    <ligand>
        <name>S-adenosyl-L-methionine</name>
        <dbReference type="ChEBI" id="CHEBI:59789"/>
    </ligand>
</feature>
<feature type="binding site" evidence="1">
    <location>
        <begin position="129"/>
        <end position="130"/>
    </location>
    <ligand>
        <name>S-adenosyl-L-methionine</name>
        <dbReference type="ChEBI" id="CHEBI:59789"/>
    </ligand>
</feature>
<feature type="binding site" evidence="1">
    <location>
        <position position="147"/>
    </location>
    <ligand>
        <name>S-adenosyl-L-methionine</name>
        <dbReference type="ChEBI" id="CHEBI:59789"/>
    </ligand>
</feature>
<feature type="modified residue" description="N6-acetyllysine" evidence="3">
    <location>
        <position position="53"/>
    </location>
</feature>
<sequence length="240" mass="27692">MSLGIKEHPDAEVQKNRVLTLDDWQDKWVTRHIAFHQEQGHQLLKKHFDTFLKGQSGLRVFFPLCGKAIEMKWFADRGHTVVGVEISEIGIREFFAEQNLSYTEEPLTEIAGAKVFKSSSGNISLYCCSIFDLPRANIGKFDRIWDRGALVAVNPGDRDRYADIILSLLRKGYHYLLVVLSYDPTKHTGPPFYVPDAELKKLFGTKCNMQCLEEVDALEERHKTWGVDYFFEKLYLLTEK</sequence>
<accession>Q9Z0T0</accession>
<protein>
    <recommendedName>
        <fullName>Thiopurine S-methyltransferase</fullName>
        <ecNumber>2.1.1.67</ecNumber>
    </recommendedName>
    <alternativeName>
        <fullName>Thiopurine methyltransferase</fullName>
    </alternativeName>
</protein>
<reference key="1">
    <citation type="submission" date="1999-01" db="EMBL/GenBank/DDBJ databases">
        <authorList>
            <person name="Krynetski E.Y."/>
            <person name="Fessing M.Y."/>
            <person name="Evans W.E."/>
        </authorList>
    </citation>
    <scope>NUCLEOTIDE SEQUENCE [MRNA]</scope>
    <source>
        <strain>Sprague-Dawley</strain>
    </source>
</reference>
<gene>
    <name type="primary">Tpmt</name>
</gene>
<evidence type="ECO:0000250" key="1"/>
<evidence type="ECO:0000250" key="2">
    <source>
        <dbReference type="UniProtKB" id="O55060"/>
    </source>
</evidence>
<evidence type="ECO:0000250" key="3">
    <source>
        <dbReference type="UniProtKB" id="P51580"/>
    </source>
</evidence>
<evidence type="ECO:0000305" key="4"/>
<name>TPMT_RAT</name>
<keyword id="KW-0007">Acetylation</keyword>
<keyword id="KW-0963">Cytoplasm</keyword>
<keyword id="KW-0489">Methyltransferase</keyword>
<keyword id="KW-1185">Reference proteome</keyword>
<keyword id="KW-0949">S-adenosyl-L-methionine</keyword>
<keyword id="KW-0808">Transferase</keyword>
<dbReference type="EC" id="2.1.1.67"/>
<dbReference type="EMBL" id="AF120100">
    <property type="protein sequence ID" value="AAD17293.1"/>
    <property type="molecule type" value="mRNA"/>
</dbReference>
<dbReference type="RefSeq" id="NP_001382599.1">
    <property type="nucleotide sequence ID" value="NM_001395670.1"/>
</dbReference>
<dbReference type="RefSeq" id="XP_006253832.1">
    <property type="nucleotide sequence ID" value="XM_006253770.3"/>
</dbReference>
<dbReference type="SMR" id="Q9Z0T0"/>
<dbReference type="FunCoup" id="Q9Z0T0">
    <property type="interactions" value="366"/>
</dbReference>
<dbReference type="STRING" id="10116.ENSRNOP00000072177"/>
<dbReference type="iPTMnet" id="Q9Z0T0"/>
<dbReference type="PhosphoSitePlus" id="Q9Z0T0"/>
<dbReference type="jPOST" id="Q9Z0T0"/>
<dbReference type="GeneID" id="690050"/>
<dbReference type="UCSC" id="RGD:620089">
    <property type="organism name" value="rat"/>
</dbReference>
<dbReference type="AGR" id="RGD:1585162"/>
<dbReference type="RGD" id="1585162">
    <property type="gene designation" value="Tpmt"/>
</dbReference>
<dbReference type="VEuPathDB" id="HostDB:ENSRNOG00000016468"/>
<dbReference type="HOGENOM" id="CLU_085515_2_0_1"/>
<dbReference type="InParanoid" id="Q9Z0T0"/>
<dbReference type="PhylomeDB" id="Q9Z0T0"/>
<dbReference type="Reactome" id="R-RNO-156581">
    <property type="pathway name" value="Methylation"/>
</dbReference>
<dbReference type="Reactome" id="R-RNO-9748787">
    <property type="pathway name" value="Azathioprine ADME"/>
</dbReference>
<dbReference type="PRO" id="PR:Q9Z0T0"/>
<dbReference type="Proteomes" id="UP000002494">
    <property type="component" value="Chromosome 17"/>
</dbReference>
<dbReference type="Bgee" id="ENSRNOG00000016468">
    <property type="expression patterns" value="Expressed in kidney and 20 other cell types or tissues"/>
</dbReference>
<dbReference type="ExpressionAtlas" id="Q9Z0T0">
    <property type="expression patterns" value="baseline and differential"/>
</dbReference>
<dbReference type="GO" id="GO:0005737">
    <property type="term" value="C:cytoplasm"/>
    <property type="evidence" value="ECO:0007669"/>
    <property type="project" value="UniProtKB-SubCell"/>
</dbReference>
<dbReference type="GO" id="GO:1904047">
    <property type="term" value="F:S-adenosyl-L-methionine binding"/>
    <property type="evidence" value="ECO:0000266"/>
    <property type="project" value="RGD"/>
</dbReference>
<dbReference type="GO" id="GO:0008119">
    <property type="term" value="F:thiopurine S-methyltransferase activity"/>
    <property type="evidence" value="ECO:0000266"/>
    <property type="project" value="RGD"/>
</dbReference>
<dbReference type="GO" id="GO:0032259">
    <property type="term" value="P:methylation"/>
    <property type="evidence" value="ECO:0007669"/>
    <property type="project" value="UniProtKB-KW"/>
</dbReference>
<dbReference type="GO" id="GO:0033574">
    <property type="term" value="P:response to testosterone"/>
    <property type="evidence" value="ECO:0000270"/>
    <property type="project" value="RGD"/>
</dbReference>
<dbReference type="GO" id="GO:0006805">
    <property type="term" value="P:xenobiotic metabolic process"/>
    <property type="evidence" value="ECO:0000266"/>
    <property type="project" value="RGD"/>
</dbReference>
<dbReference type="FunFam" id="3.40.50.150:FF:000101">
    <property type="entry name" value="Thiopurine S-methyltransferase"/>
    <property type="match status" value="1"/>
</dbReference>
<dbReference type="Gene3D" id="3.40.50.150">
    <property type="entry name" value="Vaccinia Virus protein VP39"/>
    <property type="match status" value="1"/>
</dbReference>
<dbReference type="HAMAP" id="MF_00812">
    <property type="entry name" value="Thiopur_methtran"/>
    <property type="match status" value="1"/>
</dbReference>
<dbReference type="InterPro" id="IPR029063">
    <property type="entry name" value="SAM-dependent_MTases_sf"/>
</dbReference>
<dbReference type="InterPro" id="IPR025835">
    <property type="entry name" value="Thiopurine_S-MeTrfase"/>
</dbReference>
<dbReference type="InterPro" id="IPR008854">
    <property type="entry name" value="TPMT"/>
</dbReference>
<dbReference type="PANTHER" id="PTHR10259">
    <property type="entry name" value="THIOPURINE S-METHYLTRANSFERASE"/>
    <property type="match status" value="1"/>
</dbReference>
<dbReference type="PANTHER" id="PTHR10259:SF11">
    <property type="entry name" value="THIOPURINE S-METHYLTRANSFERASE"/>
    <property type="match status" value="1"/>
</dbReference>
<dbReference type="Pfam" id="PF05724">
    <property type="entry name" value="TPMT"/>
    <property type="match status" value="1"/>
</dbReference>
<dbReference type="PIRSF" id="PIRSF023956">
    <property type="entry name" value="Thiopurine_S-methyltransferase"/>
    <property type="match status" value="1"/>
</dbReference>
<dbReference type="SUPFAM" id="SSF53335">
    <property type="entry name" value="S-adenosyl-L-methionine-dependent methyltransferases"/>
    <property type="match status" value="1"/>
</dbReference>
<dbReference type="PROSITE" id="PS51585">
    <property type="entry name" value="SAM_MT_TPMT"/>
    <property type="match status" value="1"/>
</dbReference>
<organism>
    <name type="scientific">Rattus norvegicus</name>
    <name type="common">Rat</name>
    <dbReference type="NCBI Taxonomy" id="10116"/>
    <lineage>
        <taxon>Eukaryota</taxon>
        <taxon>Metazoa</taxon>
        <taxon>Chordata</taxon>
        <taxon>Craniata</taxon>
        <taxon>Vertebrata</taxon>
        <taxon>Euteleostomi</taxon>
        <taxon>Mammalia</taxon>
        <taxon>Eutheria</taxon>
        <taxon>Euarchontoglires</taxon>
        <taxon>Glires</taxon>
        <taxon>Rodentia</taxon>
        <taxon>Myomorpha</taxon>
        <taxon>Muroidea</taxon>
        <taxon>Muridae</taxon>
        <taxon>Murinae</taxon>
        <taxon>Rattus</taxon>
    </lineage>
</organism>